<feature type="chain" id="PRO_0000116682" description="Meiotically up-regulated gene 61 protein">
    <location>
        <begin position="1"/>
        <end position="844"/>
    </location>
</feature>
<feature type="transmembrane region" description="Helical" evidence="1">
    <location>
        <begin position="459"/>
        <end position="479"/>
    </location>
</feature>
<feature type="transmembrane region" description="Helical" evidence="1">
    <location>
        <begin position="705"/>
        <end position="725"/>
    </location>
</feature>
<feature type="region of interest" description="Disordered" evidence="2">
    <location>
        <begin position="333"/>
        <end position="354"/>
    </location>
</feature>
<feature type="region of interest" description="Disordered" evidence="2">
    <location>
        <begin position="384"/>
        <end position="415"/>
    </location>
</feature>
<feature type="compositionally biased region" description="Polar residues" evidence="2">
    <location>
        <begin position="384"/>
        <end position="394"/>
    </location>
</feature>
<feature type="compositionally biased region" description="Basic and acidic residues" evidence="2">
    <location>
        <begin position="395"/>
        <end position="407"/>
    </location>
</feature>
<feature type="binding site" evidence="1">
    <location>
        <begin position="605"/>
        <end position="612"/>
    </location>
    <ligand>
        <name>ATP</name>
        <dbReference type="ChEBI" id="CHEBI:30616"/>
    </ligand>
</feature>
<proteinExistence type="evidence at protein level"/>
<keyword id="KW-0067">ATP-binding</keyword>
<keyword id="KW-0159">Chromosome partition</keyword>
<keyword id="KW-0256">Endoplasmic reticulum</keyword>
<keyword id="KW-0469">Meiosis</keyword>
<keyword id="KW-0472">Membrane</keyword>
<keyword id="KW-0547">Nucleotide-binding</keyword>
<keyword id="KW-0539">Nucleus</keyword>
<keyword id="KW-1185">Reference proteome</keyword>
<keyword id="KW-0812">Transmembrane</keyword>
<keyword id="KW-1133">Transmembrane helix</keyword>
<accession>O13712</accession>
<accession>Q9USD6</accession>
<evidence type="ECO:0000255" key="1"/>
<evidence type="ECO:0000256" key="2">
    <source>
        <dbReference type="SAM" id="MobiDB-lite"/>
    </source>
</evidence>
<evidence type="ECO:0000269" key="3">
    <source>
    </source>
</evidence>
<evidence type="ECO:0000269" key="4">
    <source>
    </source>
</evidence>
<name>MUG61_SCHPO</name>
<reference key="1">
    <citation type="journal article" date="2002" name="Nature">
        <title>The genome sequence of Schizosaccharomyces pombe.</title>
        <authorList>
            <person name="Wood V."/>
            <person name="Gwilliam R."/>
            <person name="Rajandream M.A."/>
            <person name="Lyne M.H."/>
            <person name="Lyne R."/>
            <person name="Stewart A."/>
            <person name="Sgouros J.G."/>
            <person name="Peat N."/>
            <person name="Hayles J."/>
            <person name="Baker S.G."/>
            <person name="Basham D."/>
            <person name="Bowman S."/>
            <person name="Brooks K."/>
            <person name="Brown D."/>
            <person name="Brown S."/>
            <person name="Chillingworth T."/>
            <person name="Churcher C.M."/>
            <person name="Collins M."/>
            <person name="Connor R."/>
            <person name="Cronin A."/>
            <person name="Davis P."/>
            <person name="Feltwell T."/>
            <person name="Fraser A."/>
            <person name="Gentles S."/>
            <person name="Goble A."/>
            <person name="Hamlin N."/>
            <person name="Harris D.E."/>
            <person name="Hidalgo J."/>
            <person name="Hodgson G."/>
            <person name="Holroyd S."/>
            <person name="Hornsby T."/>
            <person name="Howarth S."/>
            <person name="Huckle E.J."/>
            <person name="Hunt S."/>
            <person name="Jagels K."/>
            <person name="James K.D."/>
            <person name="Jones L."/>
            <person name="Jones M."/>
            <person name="Leather S."/>
            <person name="McDonald S."/>
            <person name="McLean J."/>
            <person name="Mooney P."/>
            <person name="Moule S."/>
            <person name="Mungall K.L."/>
            <person name="Murphy L.D."/>
            <person name="Niblett D."/>
            <person name="Odell C."/>
            <person name="Oliver K."/>
            <person name="O'Neil S."/>
            <person name="Pearson D."/>
            <person name="Quail M.A."/>
            <person name="Rabbinowitsch E."/>
            <person name="Rutherford K.M."/>
            <person name="Rutter S."/>
            <person name="Saunders D."/>
            <person name="Seeger K."/>
            <person name="Sharp S."/>
            <person name="Skelton J."/>
            <person name="Simmonds M.N."/>
            <person name="Squares R."/>
            <person name="Squares S."/>
            <person name="Stevens K."/>
            <person name="Taylor K."/>
            <person name="Taylor R.G."/>
            <person name="Tivey A."/>
            <person name="Walsh S.V."/>
            <person name="Warren T."/>
            <person name="Whitehead S."/>
            <person name="Woodward J.R."/>
            <person name="Volckaert G."/>
            <person name="Aert R."/>
            <person name="Robben J."/>
            <person name="Grymonprez B."/>
            <person name="Weltjens I."/>
            <person name="Vanstreels E."/>
            <person name="Rieger M."/>
            <person name="Schaefer M."/>
            <person name="Mueller-Auer S."/>
            <person name="Gabel C."/>
            <person name="Fuchs M."/>
            <person name="Duesterhoeft A."/>
            <person name="Fritzc C."/>
            <person name="Holzer E."/>
            <person name="Moestl D."/>
            <person name="Hilbert H."/>
            <person name="Borzym K."/>
            <person name="Langer I."/>
            <person name="Beck A."/>
            <person name="Lehrach H."/>
            <person name="Reinhardt R."/>
            <person name="Pohl T.M."/>
            <person name="Eger P."/>
            <person name="Zimmermann W."/>
            <person name="Wedler H."/>
            <person name="Wambutt R."/>
            <person name="Purnelle B."/>
            <person name="Goffeau A."/>
            <person name="Cadieu E."/>
            <person name="Dreano S."/>
            <person name="Gloux S."/>
            <person name="Lelaure V."/>
            <person name="Mottier S."/>
            <person name="Galibert F."/>
            <person name="Aves S.J."/>
            <person name="Xiang Z."/>
            <person name="Hunt C."/>
            <person name="Moore K."/>
            <person name="Hurst S.M."/>
            <person name="Lucas M."/>
            <person name="Rochet M."/>
            <person name="Gaillardin C."/>
            <person name="Tallada V.A."/>
            <person name="Garzon A."/>
            <person name="Thode G."/>
            <person name="Daga R.R."/>
            <person name="Cruzado L."/>
            <person name="Jimenez J."/>
            <person name="Sanchez M."/>
            <person name="del Rey F."/>
            <person name="Benito J."/>
            <person name="Dominguez A."/>
            <person name="Revuelta J.L."/>
            <person name="Moreno S."/>
            <person name="Armstrong J."/>
            <person name="Forsburg S.L."/>
            <person name="Cerutti L."/>
            <person name="Lowe T."/>
            <person name="McCombie W.R."/>
            <person name="Paulsen I."/>
            <person name="Potashkin J."/>
            <person name="Shpakovski G.V."/>
            <person name="Ussery D."/>
            <person name="Barrell B.G."/>
            <person name="Nurse P."/>
        </authorList>
    </citation>
    <scope>NUCLEOTIDE SEQUENCE [LARGE SCALE GENOMIC DNA]</scope>
    <source>
        <strain>972 / ATCC 24843</strain>
    </source>
</reference>
<reference key="2">
    <citation type="journal article" date="2000" name="Genes Cells">
        <title>Large-scale screening of intracellular protein localization in living fission yeast cells by the use of a GFP-fusion genomic DNA library.</title>
        <authorList>
            <person name="Ding D.-Q."/>
            <person name="Tomita Y."/>
            <person name="Yamamoto A."/>
            <person name="Chikashige Y."/>
            <person name="Haraguchi T."/>
            <person name="Hiraoka Y."/>
        </authorList>
    </citation>
    <scope>NUCLEOTIDE SEQUENCE [LARGE SCALE GENOMIC DNA] OF 637-835</scope>
    <scope>SUBCELLULAR LOCATION</scope>
    <source>
        <strain>ATCC 38364 / 968</strain>
    </source>
</reference>
<reference key="3">
    <citation type="journal article" date="2004" name="Mol. Genet. Genomics">
        <title>Two-hybrid search for proteins that interact with Sad1 and Kms1, two membrane-bound components of the spindle pole body in fission yeast.</title>
        <authorList>
            <person name="Miki F."/>
            <person name="Kurabayashi A."/>
            <person name="Tange Y."/>
            <person name="Okazaki K."/>
            <person name="Shimanuki M."/>
            <person name="Niwa O."/>
        </authorList>
    </citation>
    <scope>INTERACTION WITH SAD1</scope>
    <scope>SUBCELLULAR LOCATION</scope>
</reference>
<reference key="4">
    <citation type="journal article" date="2005" name="Curr. Biol.">
        <title>A large-scale screen in S. pombe identifies seven novel genes required for critical meiotic events.</title>
        <authorList>
            <person name="Martin-Castellanos C."/>
            <person name="Blanco M."/>
            <person name="Rozalen A.E."/>
            <person name="Perez-Hidalgo L."/>
            <person name="Garcia A.I."/>
            <person name="Conde F."/>
            <person name="Mata J."/>
            <person name="Ellermeier C."/>
            <person name="Davis L."/>
            <person name="San-Segundo P."/>
            <person name="Smith G.R."/>
            <person name="Moreno S."/>
        </authorList>
    </citation>
    <scope>FUNCTION IN MEIOSIS</scope>
</reference>
<reference key="5">
    <citation type="journal article" date="2006" name="Nat. Biotechnol.">
        <title>ORFeome cloning and global analysis of protein localization in the fission yeast Schizosaccharomyces pombe.</title>
        <authorList>
            <person name="Matsuyama A."/>
            <person name="Arai R."/>
            <person name="Yashiroda Y."/>
            <person name="Shirai A."/>
            <person name="Kamata A."/>
            <person name="Sekido S."/>
            <person name="Kobayashi Y."/>
            <person name="Hashimoto A."/>
            <person name="Hamamoto M."/>
            <person name="Hiraoka Y."/>
            <person name="Horinouchi S."/>
            <person name="Yoshida M."/>
        </authorList>
    </citation>
    <scope>SUBCELLULAR LOCATION [LARGE SCALE ANALYSIS]</scope>
</reference>
<organism>
    <name type="scientific">Schizosaccharomyces pombe (strain 972 / ATCC 24843)</name>
    <name type="common">Fission yeast</name>
    <dbReference type="NCBI Taxonomy" id="284812"/>
    <lineage>
        <taxon>Eukaryota</taxon>
        <taxon>Fungi</taxon>
        <taxon>Dikarya</taxon>
        <taxon>Ascomycota</taxon>
        <taxon>Taphrinomycotina</taxon>
        <taxon>Schizosaccharomycetes</taxon>
        <taxon>Schizosaccharomycetales</taxon>
        <taxon>Schizosaccharomycetaceae</taxon>
        <taxon>Schizosaccharomyces</taxon>
    </lineage>
</organism>
<gene>
    <name type="primary">mug61</name>
    <name type="ORF">SPAC14C4.05c</name>
</gene>
<protein>
    <recommendedName>
        <fullName>Meiotically up-regulated gene 61 protein</fullName>
    </recommendedName>
</protein>
<comment type="function">
    <text evidence="4">Required for correct meiotic chromosome segregation.</text>
</comment>
<comment type="subunit">
    <text evidence="3">Interacts with sad1.</text>
</comment>
<comment type="subcellular location">
    <subcellularLocation>
        <location>Endoplasmic reticulum membrane</location>
        <topology>Multi-pass membrane protein</topology>
    </subcellularLocation>
    <subcellularLocation>
        <location>Nucleus membrane</location>
        <topology>Multi-pass membrane protein</topology>
    </subcellularLocation>
</comment>
<dbReference type="EMBL" id="CU329670">
    <property type="protein sequence ID" value="CAB11198.1"/>
    <property type="molecule type" value="Genomic_DNA"/>
</dbReference>
<dbReference type="EMBL" id="AB027838">
    <property type="protein sequence ID" value="BAA87142.1"/>
    <property type="molecule type" value="Genomic_DNA"/>
</dbReference>
<dbReference type="PIR" id="T37690">
    <property type="entry name" value="T37690"/>
</dbReference>
<dbReference type="RefSeq" id="NP_594910.1">
    <property type="nucleotide sequence ID" value="NM_001020342.2"/>
</dbReference>
<dbReference type="SMR" id="O13712"/>
<dbReference type="BioGRID" id="278082">
    <property type="interactions" value="146"/>
</dbReference>
<dbReference type="FunCoup" id="O13712">
    <property type="interactions" value="26"/>
</dbReference>
<dbReference type="IntAct" id="O13712">
    <property type="interactions" value="18"/>
</dbReference>
<dbReference type="STRING" id="284812.O13712"/>
<dbReference type="iPTMnet" id="O13712"/>
<dbReference type="PaxDb" id="4896-SPAC14C4.05c.1"/>
<dbReference type="EnsemblFungi" id="SPAC14C4.05c.1">
    <property type="protein sequence ID" value="SPAC14C4.05c.1:pep"/>
    <property type="gene ID" value="SPAC14C4.05c"/>
</dbReference>
<dbReference type="GeneID" id="2541585"/>
<dbReference type="KEGG" id="spo:2541585"/>
<dbReference type="PomBase" id="SPAC14C4.05c"/>
<dbReference type="VEuPathDB" id="FungiDB:SPAC14C4.05c"/>
<dbReference type="HOGENOM" id="CLU_337438_0_0_1"/>
<dbReference type="InParanoid" id="O13712"/>
<dbReference type="OMA" id="FCEIPEE"/>
<dbReference type="PRO" id="PR:O13712"/>
<dbReference type="Proteomes" id="UP000002485">
    <property type="component" value="Chromosome I"/>
</dbReference>
<dbReference type="GO" id="GO:0034506">
    <property type="term" value="C:chromosome, centromeric core domain"/>
    <property type="evidence" value="ECO:0000314"/>
    <property type="project" value="PomBase"/>
</dbReference>
<dbReference type="GO" id="GO:0099115">
    <property type="term" value="C:chromosome, subtelomeric region"/>
    <property type="evidence" value="ECO:0000314"/>
    <property type="project" value="PomBase"/>
</dbReference>
<dbReference type="GO" id="GO:0005789">
    <property type="term" value="C:endoplasmic reticulum membrane"/>
    <property type="evidence" value="ECO:0007669"/>
    <property type="project" value="UniProtKB-SubCell"/>
</dbReference>
<dbReference type="GO" id="GO:0000792">
    <property type="term" value="C:heterochromatin"/>
    <property type="evidence" value="ECO:0000314"/>
    <property type="project" value="PomBase"/>
</dbReference>
<dbReference type="GO" id="GO:0005637">
    <property type="term" value="C:nuclear inner membrane"/>
    <property type="evidence" value="ECO:0000314"/>
    <property type="project" value="PomBase"/>
</dbReference>
<dbReference type="GO" id="GO:0031965">
    <property type="term" value="C:nuclear membrane"/>
    <property type="evidence" value="ECO:0000314"/>
    <property type="project" value="PomBase"/>
</dbReference>
<dbReference type="GO" id="GO:0034399">
    <property type="term" value="C:nuclear periphery"/>
    <property type="evidence" value="ECO:0000318"/>
    <property type="project" value="GO_Central"/>
</dbReference>
<dbReference type="GO" id="GO:0005524">
    <property type="term" value="F:ATP binding"/>
    <property type="evidence" value="ECO:0007669"/>
    <property type="project" value="UniProtKB-KW"/>
</dbReference>
<dbReference type="GO" id="GO:0003682">
    <property type="term" value="F:chromatin binding"/>
    <property type="evidence" value="ECO:0007669"/>
    <property type="project" value="InterPro"/>
</dbReference>
<dbReference type="GO" id="GO:0062239">
    <property type="term" value="F:heterochromatin-nuclear membrane anchor activity"/>
    <property type="evidence" value="ECO:0000269"/>
    <property type="project" value="PomBase"/>
</dbReference>
<dbReference type="GO" id="GO:0140698">
    <property type="term" value="P:attachment of telomeric heterochromatin to nuclear envelope"/>
    <property type="evidence" value="ECO:0000315"/>
    <property type="project" value="PomBase"/>
</dbReference>
<dbReference type="GO" id="GO:0007059">
    <property type="term" value="P:chromosome segregation"/>
    <property type="evidence" value="ECO:0007669"/>
    <property type="project" value="UniProtKB-KW"/>
</dbReference>
<dbReference type="GO" id="GO:0051321">
    <property type="term" value="P:meiotic cell cycle"/>
    <property type="evidence" value="ECO:0007669"/>
    <property type="project" value="UniProtKB-KW"/>
</dbReference>
<dbReference type="GO" id="GO:0071763">
    <property type="term" value="P:nuclear membrane organization"/>
    <property type="evidence" value="ECO:0000315"/>
    <property type="project" value="PomBase"/>
</dbReference>
<dbReference type="CDD" id="cd12935">
    <property type="entry name" value="LEM_like"/>
    <property type="match status" value="1"/>
</dbReference>
<dbReference type="InterPro" id="IPR025856">
    <property type="entry name" value="HeH/LEM_domain"/>
</dbReference>
<dbReference type="InterPro" id="IPR044780">
    <property type="entry name" value="Heh2/Src1"/>
</dbReference>
<dbReference type="InterPro" id="IPR018996">
    <property type="entry name" value="Man1/Src1-like_C"/>
</dbReference>
<dbReference type="PANTHER" id="PTHR47808">
    <property type="entry name" value="INNER NUCLEAR MEMBRANE PROTEIN HEH2-RELATED"/>
    <property type="match status" value="1"/>
</dbReference>
<dbReference type="PANTHER" id="PTHR47808:SF2">
    <property type="entry name" value="LEM DOMAIN-CONTAINING PROTEIN 2"/>
    <property type="match status" value="1"/>
</dbReference>
<dbReference type="Pfam" id="PF12949">
    <property type="entry name" value="HeH"/>
    <property type="match status" value="1"/>
</dbReference>
<dbReference type="Pfam" id="PF09402">
    <property type="entry name" value="MSC"/>
    <property type="match status" value="1"/>
</dbReference>
<sequence>MEVPSYFDPDYDPSSLRVVDLRNILTEYQIYYPSTAKKAQLITLFSKLRRAKNGLISMTELQQKNVPPSSRSPRRRVAGVTNNVTARISSKRKINMVDEANDTEISKTSQFEDNVMGMLQDENVQVLNTNTITISEESEFHASKIAKIDSRNEEITHIPFETQTELNAAVVNLDNSMESSFSIVQNLTNKDSSVDTATYDFSAEVGNIVTPASKFLDYDQSYLVNASVSGDPTPVKVLNTTSPKSENPLNQSSFLSFLGENLKPKFTSRSSSVYASPIKSSLNSLECNPSNLLSVRKNFQQSSDSYLKSNKSFDQLNNLVGLSTGNSENFTPENNSFSWTHPKKNSSSPLPQSQSSSIFVEHLNQLYEANASIHRPVNPAFSTNFGLEASNTSTPEKKKFDSQKPDDDSVNEISSDLGLSTTGIDRVEENISLTKDRQPKRPYFSLGSFISLIFSFTKVVNSLWLVLLVVPLLGFVGFWHQEVQRVGFCGVPAEPYPSSLYYLQPGVLRSSIESAYSFAHSLGIEASCQPCPENAECGFNRQLFCKEGLKASFPLLADFGLKPYPRCIPNTVKVNKVEEMVQAFMSIIGKWYYKAPKEFATFESAKNLNGKSFVDNFKDRYYMYKQDIDNVVGLKDFKVYLKTTLNRLYNSKLTRKVLYYLFSPLFTLELWKLRVRGALSKFPTNCLRSVYSHTVSLMKYLTSAVISCWRIYLLIGILAAITGTVVWRIRVYAKKHVVKHGVSVCVSHCIAKLQKTKLKSLTDFSVNPRVEVVQLRSDCFVSGVADDKGLFELVHLPLSIQLEIWEKVVSVLEGMVSVKVWDSERLAKNRAWEWIGVFSDDIAL</sequence>